<comment type="function">
    <text evidence="1">RNA chaperone that binds small regulatory RNA (sRNAs) and mRNAs to facilitate mRNA translational regulation in response to envelope stress, environmental stress and changes in metabolite concentrations. Also binds with high specificity to tRNAs.</text>
</comment>
<comment type="subunit">
    <text evidence="1">Homohexamer.</text>
</comment>
<comment type="similarity">
    <text evidence="1">Belongs to the Hfq family.</text>
</comment>
<organism>
    <name type="scientific">Shewanella denitrificans (strain OS217 / ATCC BAA-1090 / DSM 15013)</name>
    <dbReference type="NCBI Taxonomy" id="318161"/>
    <lineage>
        <taxon>Bacteria</taxon>
        <taxon>Pseudomonadati</taxon>
        <taxon>Pseudomonadota</taxon>
        <taxon>Gammaproteobacteria</taxon>
        <taxon>Alteromonadales</taxon>
        <taxon>Shewanellaceae</taxon>
        <taxon>Shewanella</taxon>
    </lineage>
</organism>
<sequence>MAKGQSLQDPFLNALRRERVPVSIYLVNGIKLQGQVESFDQFVILLKNTVSQMVYKHAISTVVPARALHITPTQSSQPGYVQHDDAPAE</sequence>
<dbReference type="EMBL" id="CP000302">
    <property type="protein sequence ID" value="ABE56481.1"/>
    <property type="molecule type" value="Genomic_DNA"/>
</dbReference>
<dbReference type="RefSeq" id="WP_011497626.1">
    <property type="nucleotide sequence ID" value="NC_007954.1"/>
</dbReference>
<dbReference type="SMR" id="Q12J95"/>
<dbReference type="STRING" id="318161.Sden_3205"/>
<dbReference type="KEGG" id="sdn:Sden_3205"/>
<dbReference type="eggNOG" id="COG1923">
    <property type="taxonomic scope" value="Bacteria"/>
</dbReference>
<dbReference type="HOGENOM" id="CLU_113688_2_2_6"/>
<dbReference type="OrthoDB" id="9799751at2"/>
<dbReference type="Proteomes" id="UP000001982">
    <property type="component" value="Chromosome"/>
</dbReference>
<dbReference type="GO" id="GO:0005829">
    <property type="term" value="C:cytosol"/>
    <property type="evidence" value="ECO:0007669"/>
    <property type="project" value="TreeGrafter"/>
</dbReference>
<dbReference type="GO" id="GO:0003723">
    <property type="term" value="F:RNA binding"/>
    <property type="evidence" value="ECO:0007669"/>
    <property type="project" value="UniProtKB-UniRule"/>
</dbReference>
<dbReference type="GO" id="GO:0006355">
    <property type="term" value="P:regulation of DNA-templated transcription"/>
    <property type="evidence" value="ECO:0007669"/>
    <property type="project" value="InterPro"/>
</dbReference>
<dbReference type="GO" id="GO:0043487">
    <property type="term" value="P:regulation of RNA stability"/>
    <property type="evidence" value="ECO:0007669"/>
    <property type="project" value="TreeGrafter"/>
</dbReference>
<dbReference type="GO" id="GO:0045974">
    <property type="term" value="P:regulation of translation, ncRNA-mediated"/>
    <property type="evidence" value="ECO:0007669"/>
    <property type="project" value="TreeGrafter"/>
</dbReference>
<dbReference type="CDD" id="cd01716">
    <property type="entry name" value="Hfq"/>
    <property type="match status" value="1"/>
</dbReference>
<dbReference type="FunFam" id="2.30.30.100:FF:000001">
    <property type="entry name" value="RNA-binding protein Hfq"/>
    <property type="match status" value="1"/>
</dbReference>
<dbReference type="Gene3D" id="2.30.30.100">
    <property type="match status" value="1"/>
</dbReference>
<dbReference type="HAMAP" id="MF_00436">
    <property type="entry name" value="Hfq"/>
    <property type="match status" value="1"/>
</dbReference>
<dbReference type="InterPro" id="IPR005001">
    <property type="entry name" value="Hfq"/>
</dbReference>
<dbReference type="InterPro" id="IPR010920">
    <property type="entry name" value="LSM_dom_sf"/>
</dbReference>
<dbReference type="InterPro" id="IPR047575">
    <property type="entry name" value="Sm"/>
</dbReference>
<dbReference type="NCBIfam" id="TIGR02383">
    <property type="entry name" value="Hfq"/>
    <property type="match status" value="1"/>
</dbReference>
<dbReference type="NCBIfam" id="NF001602">
    <property type="entry name" value="PRK00395.1"/>
    <property type="match status" value="1"/>
</dbReference>
<dbReference type="PANTHER" id="PTHR34772">
    <property type="entry name" value="RNA-BINDING PROTEIN HFQ"/>
    <property type="match status" value="1"/>
</dbReference>
<dbReference type="PANTHER" id="PTHR34772:SF1">
    <property type="entry name" value="RNA-BINDING PROTEIN HFQ"/>
    <property type="match status" value="1"/>
</dbReference>
<dbReference type="Pfam" id="PF17209">
    <property type="entry name" value="Hfq"/>
    <property type="match status" value="1"/>
</dbReference>
<dbReference type="SUPFAM" id="SSF50182">
    <property type="entry name" value="Sm-like ribonucleoproteins"/>
    <property type="match status" value="1"/>
</dbReference>
<dbReference type="PROSITE" id="PS52002">
    <property type="entry name" value="SM"/>
    <property type="match status" value="1"/>
</dbReference>
<gene>
    <name evidence="1" type="primary">hfq</name>
    <name type="ordered locus">Sden_3205</name>
</gene>
<protein>
    <recommendedName>
        <fullName evidence="1">RNA-binding protein Hfq</fullName>
    </recommendedName>
</protein>
<reference key="1">
    <citation type="submission" date="2006-03" db="EMBL/GenBank/DDBJ databases">
        <title>Complete sequence of Shewanella denitrificans OS217.</title>
        <authorList>
            <consortium name="US DOE Joint Genome Institute"/>
            <person name="Copeland A."/>
            <person name="Lucas S."/>
            <person name="Lapidus A."/>
            <person name="Barry K."/>
            <person name="Detter J.C."/>
            <person name="Glavina del Rio T."/>
            <person name="Hammon N."/>
            <person name="Israni S."/>
            <person name="Dalin E."/>
            <person name="Tice H."/>
            <person name="Pitluck S."/>
            <person name="Brettin T."/>
            <person name="Bruce D."/>
            <person name="Han C."/>
            <person name="Tapia R."/>
            <person name="Gilna P."/>
            <person name="Kiss H."/>
            <person name="Schmutz J."/>
            <person name="Larimer F."/>
            <person name="Land M."/>
            <person name="Hauser L."/>
            <person name="Kyrpides N."/>
            <person name="Lykidis A."/>
            <person name="Richardson P."/>
        </authorList>
    </citation>
    <scope>NUCLEOTIDE SEQUENCE [LARGE SCALE GENOMIC DNA]</scope>
    <source>
        <strain>OS217 / ATCC BAA-1090 / DSM 15013</strain>
    </source>
</reference>
<name>HFQ_SHEDO</name>
<keyword id="KW-1185">Reference proteome</keyword>
<keyword id="KW-0694">RNA-binding</keyword>
<keyword id="KW-0346">Stress response</keyword>
<proteinExistence type="inferred from homology"/>
<feature type="chain" id="PRO_0000265187" description="RNA-binding protein Hfq">
    <location>
        <begin position="1"/>
        <end position="89"/>
    </location>
</feature>
<feature type="domain" description="Sm" evidence="2">
    <location>
        <begin position="9"/>
        <end position="68"/>
    </location>
</feature>
<accession>Q12J95</accession>
<evidence type="ECO:0000255" key="1">
    <source>
        <dbReference type="HAMAP-Rule" id="MF_00436"/>
    </source>
</evidence>
<evidence type="ECO:0000255" key="2">
    <source>
        <dbReference type="PROSITE-ProRule" id="PRU01346"/>
    </source>
</evidence>